<sequence length="396" mass="42429">MTAVQQITVLGATGSIGLSTLDVIARHPDRYQVFALTGFTRLAELLALCVKHEPRFAVVPEAAAASRLQQDLRGAGLATQVLVGEQGLCEVASAPEVDAVMAAIVGAAGLRPTLAAVEAGKKILLANKEALVMSGALFMQAVGKSGSVLLPIDSEHNAIFQCMPADFSRGLSRVGVRRILLTASGGPFRQTPLEELEHVSPEQACAHPNWSMGRKISVDSASMMNKGLELIEACWLFDARPSQVEVVVHPQSVIHSLVDYVDGSVLAQLGNPDMRTPIANALAWPERIDSGVAPLDLFAIARLDFQAPDEQRFPCLRLARQAAEAGNSAPAMLNAANEVAVSAFLERRIRYPEIASIIDEVLTREPVVAVNELDAVFAADARARVLAQQWLQRNGR</sequence>
<name>DXR_PSEF5</name>
<accession>Q4KHH0</accession>
<evidence type="ECO:0000255" key="1">
    <source>
        <dbReference type="HAMAP-Rule" id="MF_00183"/>
    </source>
</evidence>
<proteinExistence type="inferred from homology"/>
<comment type="function">
    <text evidence="1">Catalyzes the NADPH-dependent rearrangement and reduction of 1-deoxy-D-xylulose-5-phosphate (DXP) to 2-C-methyl-D-erythritol 4-phosphate (MEP).</text>
</comment>
<comment type="catalytic activity">
    <reaction evidence="1">
        <text>2-C-methyl-D-erythritol 4-phosphate + NADP(+) = 1-deoxy-D-xylulose 5-phosphate + NADPH + H(+)</text>
        <dbReference type="Rhea" id="RHEA:13717"/>
        <dbReference type="ChEBI" id="CHEBI:15378"/>
        <dbReference type="ChEBI" id="CHEBI:57783"/>
        <dbReference type="ChEBI" id="CHEBI:57792"/>
        <dbReference type="ChEBI" id="CHEBI:58262"/>
        <dbReference type="ChEBI" id="CHEBI:58349"/>
        <dbReference type="EC" id="1.1.1.267"/>
    </reaction>
    <physiologicalReaction direction="right-to-left" evidence="1">
        <dbReference type="Rhea" id="RHEA:13719"/>
    </physiologicalReaction>
</comment>
<comment type="cofactor">
    <cofactor evidence="1">
        <name>Mg(2+)</name>
        <dbReference type="ChEBI" id="CHEBI:18420"/>
    </cofactor>
    <cofactor evidence="1">
        <name>Mn(2+)</name>
        <dbReference type="ChEBI" id="CHEBI:29035"/>
    </cofactor>
</comment>
<comment type="pathway">
    <text evidence="1">Isoprenoid biosynthesis; isopentenyl diphosphate biosynthesis via DXP pathway; isopentenyl diphosphate from 1-deoxy-D-xylulose 5-phosphate: step 1/6.</text>
</comment>
<comment type="similarity">
    <text evidence="1">Belongs to the DXR family.</text>
</comment>
<keyword id="KW-0414">Isoprene biosynthesis</keyword>
<keyword id="KW-0464">Manganese</keyword>
<keyword id="KW-0479">Metal-binding</keyword>
<keyword id="KW-0521">NADP</keyword>
<keyword id="KW-0560">Oxidoreductase</keyword>
<feature type="chain" id="PRO_0000163697" description="1-deoxy-D-xylulose 5-phosphate reductoisomerase">
    <location>
        <begin position="1"/>
        <end position="396"/>
    </location>
</feature>
<feature type="binding site" evidence="1">
    <location>
        <position position="13"/>
    </location>
    <ligand>
        <name>NADPH</name>
        <dbReference type="ChEBI" id="CHEBI:57783"/>
    </ligand>
</feature>
<feature type="binding site" evidence="1">
    <location>
        <position position="14"/>
    </location>
    <ligand>
        <name>NADPH</name>
        <dbReference type="ChEBI" id="CHEBI:57783"/>
    </ligand>
</feature>
<feature type="binding site" evidence="1">
    <location>
        <position position="15"/>
    </location>
    <ligand>
        <name>NADPH</name>
        <dbReference type="ChEBI" id="CHEBI:57783"/>
    </ligand>
</feature>
<feature type="binding site" evidence="1">
    <location>
        <position position="16"/>
    </location>
    <ligand>
        <name>NADPH</name>
        <dbReference type="ChEBI" id="CHEBI:57783"/>
    </ligand>
</feature>
<feature type="binding site" evidence="1">
    <location>
        <position position="127"/>
    </location>
    <ligand>
        <name>NADPH</name>
        <dbReference type="ChEBI" id="CHEBI:57783"/>
    </ligand>
</feature>
<feature type="binding site" evidence="1">
    <location>
        <position position="128"/>
    </location>
    <ligand>
        <name>1-deoxy-D-xylulose 5-phosphate</name>
        <dbReference type="ChEBI" id="CHEBI:57792"/>
    </ligand>
</feature>
<feature type="binding site" evidence="1">
    <location>
        <position position="129"/>
    </location>
    <ligand>
        <name>NADPH</name>
        <dbReference type="ChEBI" id="CHEBI:57783"/>
    </ligand>
</feature>
<feature type="binding site" evidence="1">
    <location>
        <position position="153"/>
    </location>
    <ligand>
        <name>Mn(2+)</name>
        <dbReference type="ChEBI" id="CHEBI:29035"/>
    </ligand>
</feature>
<feature type="binding site" evidence="1">
    <location>
        <position position="154"/>
    </location>
    <ligand>
        <name>1-deoxy-D-xylulose 5-phosphate</name>
        <dbReference type="ChEBI" id="CHEBI:57792"/>
    </ligand>
</feature>
<feature type="binding site" evidence="1">
    <location>
        <position position="155"/>
    </location>
    <ligand>
        <name>1-deoxy-D-xylulose 5-phosphate</name>
        <dbReference type="ChEBI" id="CHEBI:57792"/>
    </ligand>
</feature>
<feature type="binding site" evidence="1">
    <location>
        <position position="155"/>
    </location>
    <ligand>
        <name>Mn(2+)</name>
        <dbReference type="ChEBI" id="CHEBI:29035"/>
    </ligand>
</feature>
<feature type="binding site" evidence="1">
    <location>
        <position position="184"/>
    </location>
    <ligand>
        <name>1-deoxy-D-xylulose 5-phosphate</name>
        <dbReference type="ChEBI" id="CHEBI:57792"/>
    </ligand>
</feature>
<feature type="binding site" evidence="1">
    <location>
        <position position="207"/>
    </location>
    <ligand>
        <name>1-deoxy-D-xylulose 5-phosphate</name>
        <dbReference type="ChEBI" id="CHEBI:57792"/>
    </ligand>
</feature>
<feature type="binding site" evidence="1">
    <location>
        <position position="213"/>
    </location>
    <ligand>
        <name>NADPH</name>
        <dbReference type="ChEBI" id="CHEBI:57783"/>
    </ligand>
</feature>
<feature type="binding site" evidence="1">
    <location>
        <position position="220"/>
    </location>
    <ligand>
        <name>1-deoxy-D-xylulose 5-phosphate</name>
        <dbReference type="ChEBI" id="CHEBI:57792"/>
    </ligand>
</feature>
<feature type="binding site" evidence="1">
    <location>
        <position position="225"/>
    </location>
    <ligand>
        <name>1-deoxy-D-xylulose 5-phosphate</name>
        <dbReference type="ChEBI" id="CHEBI:57792"/>
    </ligand>
</feature>
<feature type="binding site" evidence="1">
    <location>
        <position position="226"/>
    </location>
    <ligand>
        <name>1-deoxy-D-xylulose 5-phosphate</name>
        <dbReference type="ChEBI" id="CHEBI:57792"/>
    </ligand>
</feature>
<feature type="binding site" evidence="1">
    <location>
        <position position="229"/>
    </location>
    <ligand>
        <name>1-deoxy-D-xylulose 5-phosphate</name>
        <dbReference type="ChEBI" id="CHEBI:57792"/>
    </ligand>
</feature>
<feature type="binding site" evidence="1">
    <location>
        <position position="229"/>
    </location>
    <ligand>
        <name>Mn(2+)</name>
        <dbReference type="ChEBI" id="CHEBI:29035"/>
    </ligand>
</feature>
<protein>
    <recommendedName>
        <fullName evidence="1">1-deoxy-D-xylulose 5-phosphate reductoisomerase</fullName>
        <shortName evidence="1">DXP reductoisomerase</shortName>
        <ecNumber evidence="1">1.1.1.267</ecNumber>
    </recommendedName>
    <alternativeName>
        <fullName evidence="1">1-deoxyxylulose-5-phosphate reductoisomerase</fullName>
    </alternativeName>
    <alternativeName>
        <fullName evidence="1">2-C-methyl-D-erythritol 4-phosphate synthase</fullName>
    </alternativeName>
</protein>
<organism>
    <name type="scientific">Pseudomonas fluorescens (strain ATCC BAA-477 / NRRL B-23932 / Pf-5)</name>
    <dbReference type="NCBI Taxonomy" id="220664"/>
    <lineage>
        <taxon>Bacteria</taxon>
        <taxon>Pseudomonadati</taxon>
        <taxon>Pseudomonadota</taxon>
        <taxon>Gammaproteobacteria</taxon>
        <taxon>Pseudomonadales</taxon>
        <taxon>Pseudomonadaceae</taxon>
        <taxon>Pseudomonas</taxon>
    </lineage>
</organism>
<gene>
    <name evidence="1" type="primary">dxr</name>
    <name type="ordered locus">PFL_1182</name>
</gene>
<reference key="1">
    <citation type="journal article" date="2005" name="Nat. Biotechnol.">
        <title>Complete genome sequence of the plant commensal Pseudomonas fluorescens Pf-5.</title>
        <authorList>
            <person name="Paulsen I.T."/>
            <person name="Press C.M."/>
            <person name="Ravel J."/>
            <person name="Kobayashi D.Y."/>
            <person name="Myers G.S.A."/>
            <person name="Mavrodi D.V."/>
            <person name="DeBoy R.T."/>
            <person name="Seshadri R."/>
            <person name="Ren Q."/>
            <person name="Madupu R."/>
            <person name="Dodson R.J."/>
            <person name="Durkin A.S."/>
            <person name="Brinkac L.M."/>
            <person name="Daugherty S.C."/>
            <person name="Sullivan S.A."/>
            <person name="Rosovitz M.J."/>
            <person name="Gwinn M.L."/>
            <person name="Zhou L."/>
            <person name="Schneider D.J."/>
            <person name="Cartinhour S.W."/>
            <person name="Nelson W.C."/>
            <person name="Weidman J."/>
            <person name="Watkins K."/>
            <person name="Tran K."/>
            <person name="Khouri H."/>
            <person name="Pierson E.A."/>
            <person name="Pierson L.S. III"/>
            <person name="Thomashow L.S."/>
            <person name="Loper J.E."/>
        </authorList>
    </citation>
    <scope>NUCLEOTIDE SEQUENCE [LARGE SCALE GENOMIC DNA]</scope>
    <source>
        <strain>ATCC BAA-477 / NRRL B-23932 / Pf-5</strain>
    </source>
</reference>
<dbReference type="EC" id="1.1.1.267" evidence="1"/>
<dbReference type="EMBL" id="CP000076">
    <property type="protein sequence ID" value="AAY90469.1"/>
    <property type="molecule type" value="Genomic_DNA"/>
</dbReference>
<dbReference type="RefSeq" id="WP_011059530.1">
    <property type="nucleotide sequence ID" value="NC_004129.6"/>
</dbReference>
<dbReference type="SMR" id="Q4KHH0"/>
<dbReference type="STRING" id="220664.PFL_1182"/>
<dbReference type="KEGG" id="pfl:PFL_1182"/>
<dbReference type="PATRIC" id="fig|220664.5.peg.1214"/>
<dbReference type="eggNOG" id="COG0743">
    <property type="taxonomic scope" value="Bacteria"/>
</dbReference>
<dbReference type="HOGENOM" id="CLU_035714_4_0_6"/>
<dbReference type="UniPathway" id="UPA00056">
    <property type="reaction ID" value="UER00092"/>
</dbReference>
<dbReference type="Proteomes" id="UP000008540">
    <property type="component" value="Chromosome"/>
</dbReference>
<dbReference type="GO" id="GO:0030604">
    <property type="term" value="F:1-deoxy-D-xylulose-5-phosphate reductoisomerase activity"/>
    <property type="evidence" value="ECO:0007669"/>
    <property type="project" value="UniProtKB-UniRule"/>
</dbReference>
<dbReference type="GO" id="GO:0030145">
    <property type="term" value="F:manganese ion binding"/>
    <property type="evidence" value="ECO:0007669"/>
    <property type="project" value="TreeGrafter"/>
</dbReference>
<dbReference type="GO" id="GO:0070402">
    <property type="term" value="F:NADPH binding"/>
    <property type="evidence" value="ECO:0007669"/>
    <property type="project" value="InterPro"/>
</dbReference>
<dbReference type="GO" id="GO:0051484">
    <property type="term" value="P:isopentenyl diphosphate biosynthetic process, methylerythritol 4-phosphate pathway involved in terpenoid biosynthetic process"/>
    <property type="evidence" value="ECO:0007669"/>
    <property type="project" value="TreeGrafter"/>
</dbReference>
<dbReference type="FunFam" id="3.40.50.720:FF:000045">
    <property type="entry name" value="1-deoxy-D-xylulose 5-phosphate reductoisomerase"/>
    <property type="match status" value="1"/>
</dbReference>
<dbReference type="Gene3D" id="1.10.1740.10">
    <property type="match status" value="1"/>
</dbReference>
<dbReference type="Gene3D" id="3.40.50.720">
    <property type="entry name" value="NAD(P)-binding Rossmann-like Domain"/>
    <property type="match status" value="1"/>
</dbReference>
<dbReference type="HAMAP" id="MF_00183">
    <property type="entry name" value="DXP_reductoisom"/>
    <property type="match status" value="1"/>
</dbReference>
<dbReference type="InterPro" id="IPR003821">
    <property type="entry name" value="DXP_reductoisomerase"/>
</dbReference>
<dbReference type="InterPro" id="IPR013644">
    <property type="entry name" value="DXP_reductoisomerase_C"/>
</dbReference>
<dbReference type="InterPro" id="IPR013512">
    <property type="entry name" value="DXP_reductoisomerase_N"/>
</dbReference>
<dbReference type="InterPro" id="IPR026877">
    <property type="entry name" value="DXPR_C"/>
</dbReference>
<dbReference type="InterPro" id="IPR036169">
    <property type="entry name" value="DXPR_C_sf"/>
</dbReference>
<dbReference type="InterPro" id="IPR036291">
    <property type="entry name" value="NAD(P)-bd_dom_sf"/>
</dbReference>
<dbReference type="NCBIfam" id="TIGR00243">
    <property type="entry name" value="Dxr"/>
    <property type="match status" value="1"/>
</dbReference>
<dbReference type="NCBIfam" id="NF003938">
    <property type="entry name" value="PRK05447.1-1"/>
    <property type="match status" value="1"/>
</dbReference>
<dbReference type="NCBIfam" id="NF009114">
    <property type="entry name" value="PRK12464.1"/>
    <property type="match status" value="1"/>
</dbReference>
<dbReference type="PANTHER" id="PTHR30525">
    <property type="entry name" value="1-DEOXY-D-XYLULOSE 5-PHOSPHATE REDUCTOISOMERASE"/>
    <property type="match status" value="1"/>
</dbReference>
<dbReference type="PANTHER" id="PTHR30525:SF0">
    <property type="entry name" value="1-DEOXY-D-XYLULOSE 5-PHOSPHATE REDUCTOISOMERASE, CHLOROPLASTIC"/>
    <property type="match status" value="1"/>
</dbReference>
<dbReference type="Pfam" id="PF08436">
    <property type="entry name" value="DXP_redisom_C"/>
    <property type="match status" value="1"/>
</dbReference>
<dbReference type="Pfam" id="PF02670">
    <property type="entry name" value="DXP_reductoisom"/>
    <property type="match status" value="1"/>
</dbReference>
<dbReference type="Pfam" id="PF13288">
    <property type="entry name" value="DXPR_C"/>
    <property type="match status" value="1"/>
</dbReference>
<dbReference type="PIRSF" id="PIRSF006205">
    <property type="entry name" value="Dxp_reductismrs"/>
    <property type="match status" value="1"/>
</dbReference>
<dbReference type="SUPFAM" id="SSF69055">
    <property type="entry name" value="1-deoxy-D-xylulose-5-phosphate reductoisomerase, C-terminal domain"/>
    <property type="match status" value="1"/>
</dbReference>
<dbReference type="SUPFAM" id="SSF55347">
    <property type="entry name" value="Glyceraldehyde-3-phosphate dehydrogenase-like, C-terminal domain"/>
    <property type="match status" value="1"/>
</dbReference>
<dbReference type="SUPFAM" id="SSF51735">
    <property type="entry name" value="NAD(P)-binding Rossmann-fold domains"/>
    <property type="match status" value="1"/>
</dbReference>